<accession>Q9PJV6</accession>
<proteinExistence type="inferred from homology"/>
<evidence type="ECO:0000250" key="1"/>
<evidence type="ECO:0000305" key="2"/>
<keyword id="KW-0963">Cytoplasm</keyword>
<keyword id="KW-0251">Elongation factor</keyword>
<keyword id="KW-0342">GTP-binding</keyword>
<keyword id="KW-0547">Nucleotide-binding</keyword>
<keyword id="KW-0648">Protein biosynthesis</keyword>
<comment type="function">
    <text evidence="1">Catalyzes the GTP-dependent ribosomal translocation step during translation elongation. During this step, the ribosome changes from the pre-translocational (PRE) to the post-translocational (POST) state as the newly formed A-site-bound peptidyl-tRNA and P-site-bound deacylated tRNA move to the P and E sites, respectively. Catalyzes the coordinated movement of the two tRNA molecules, the mRNA and conformational changes in the ribosome (By similarity).</text>
</comment>
<comment type="subcellular location">
    <subcellularLocation>
        <location evidence="1">Cytoplasm</location>
    </subcellularLocation>
</comment>
<comment type="similarity">
    <text evidence="2">Belongs to the TRAFAC class translation factor GTPase superfamily. Classic translation factor GTPase family. EF-G/EF-2 subfamily.</text>
</comment>
<feature type="chain" id="PRO_0000091102" description="Elongation factor G">
    <location>
        <begin position="1"/>
        <end position="694"/>
    </location>
</feature>
<feature type="domain" description="tr-type G">
    <location>
        <begin position="9"/>
        <end position="288"/>
    </location>
</feature>
<feature type="binding site" evidence="1">
    <location>
        <begin position="18"/>
        <end position="25"/>
    </location>
    <ligand>
        <name>GTP</name>
        <dbReference type="ChEBI" id="CHEBI:37565"/>
    </ligand>
</feature>
<feature type="binding site" evidence="1">
    <location>
        <begin position="82"/>
        <end position="86"/>
    </location>
    <ligand>
        <name>GTP</name>
        <dbReference type="ChEBI" id="CHEBI:37565"/>
    </ligand>
</feature>
<feature type="binding site" evidence="1">
    <location>
        <begin position="136"/>
        <end position="139"/>
    </location>
    <ligand>
        <name>GTP</name>
        <dbReference type="ChEBI" id="CHEBI:37565"/>
    </ligand>
</feature>
<dbReference type="EMBL" id="AE002160">
    <property type="protein sequence ID" value="AAF39532.1"/>
    <property type="molecule type" value="Genomic_DNA"/>
</dbReference>
<dbReference type="PIR" id="G81672">
    <property type="entry name" value="G81672"/>
</dbReference>
<dbReference type="RefSeq" id="WP_010231341.1">
    <property type="nucleotide sequence ID" value="NZ_CP063055.1"/>
</dbReference>
<dbReference type="SMR" id="Q9PJV6"/>
<dbReference type="GeneID" id="1246084"/>
<dbReference type="KEGG" id="cmu:TC_0721"/>
<dbReference type="eggNOG" id="COG0480">
    <property type="taxonomic scope" value="Bacteria"/>
</dbReference>
<dbReference type="HOGENOM" id="CLU_002794_4_1_0"/>
<dbReference type="OrthoDB" id="9801591at2"/>
<dbReference type="Proteomes" id="UP000000800">
    <property type="component" value="Chromosome"/>
</dbReference>
<dbReference type="GO" id="GO:0005737">
    <property type="term" value="C:cytoplasm"/>
    <property type="evidence" value="ECO:0007669"/>
    <property type="project" value="UniProtKB-SubCell"/>
</dbReference>
<dbReference type="GO" id="GO:0005525">
    <property type="term" value="F:GTP binding"/>
    <property type="evidence" value="ECO:0007669"/>
    <property type="project" value="UniProtKB-UniRule"/>
</dbReference>
<dbReference type="GO" id="GO:0003924">
    <property type="term" value="F:GTPase activity"/>
    <property type="evidence" value="ECO:0007669"/>
    <property type="project" value="InterPro"/>
</dbReference>
<dbReference type="GO" id="GO:0003746">
    <property type="term" value="F:translation elongation factor activity"/>
    <property type="evidence" value="ECO:0007669"/>
    <property type="project" value="UniProtKB-UniRule"/>
</dbReference>
<dbReference type="GO" id="GO:0032790">
    <property type="term" value="P:ribosome disassembly"/>
    <property type="evidence" value="ECO:0007669"/>
    <property type="project" value="TreeGrafter"/>
</dbReference>
<dbReference type="CDD" id="cd01886">
    <property type="entry name" value="EF-G"/>
    <property type="match status" value="1"/>
</dbReference>
<dbReference type="CDD" id="cd16262">
    <property type="entry name" value="EFG_III"/>
    <property type="match status" value="1"/>
</dbReference>
<dbReference type="CDD" id="cd01434">
    <property type="entry name" value="EFG_mtEFG1_IV"/>
    <property type="match status" value="1"/>
</dbReference>
<dbReference type="CDD" id="cd03713">
    <property type="entry name" value="EFG_mtEFG_C"/>
    <property type="match status" value="1"/>
</dbReference>
<dbReference type="CDD" id="cd04088">
    <property type="entry name" value="EFG_mtEFG_II"/>
    <property type="match status" value="1"/>
</dbReference>
<dbReference type="FunFam" id="2.40.30.10:FF:000006">
    <property type="entry name" value="Elongation factor G"/>
    <property type="match status" value="1"/>
</dbReference>
<dbReference type="FunFam" id="3.30.230.10:FF:000003">
    <property type="entry name" value="Elongation factor G"/>
    <property type="match status" value="1"/>
</dbReference>
<dbReference type="FunFam" id="3.30.70.240:FF:000001">
    <property type="entry name" value="Elongation factor G"/>
    <property type="match status" value="1"/>
</dbReference>
<dbReference type="FunFam" id="3.30.70.870:FF:000001">
    <property type="entry name" value="Elongation factor G"/>
    <property type="match status" value="1"/>
</dbReference>
<dbReference type="FunFam" id="3.40.50.300:FF:000029">
    <property type="entry name" value="Elongation factor G"/>
    <property type="match status" value="1"/>
</dbReference>
<dbReference type="Gene3D" id="3.30.230.10">
    <property type="match status" value="1"/>
</dbReference>
<dbReference type="Gene3D" id="3.30.70.240">
    <property type="match status" value="1"/>
</dbReference>
<dbReference type="Gene3D" id="3.30.70.870">
    <property type="entry name" value="Elongation Factor G (Translational Gtpase), domain 3"/>
    <property type="match status" value="1"/>
</dbReference>
<dbReference type="Gene3D" id="3.40.50.300">
    <property type="entry name" value="P-loop containing nucleotide triphosphate hydrolases"/>
    <property type="match status" value="1"/>
</dbReference>
<dbReference type="Gene3D" id="2.40.30.10">
    <property type="entry name" value="Translation factors"/>
    <property type="match status" value="1"/>
</dbReference>
<dbReference type="HAMAP" id="MF_00054_B">
    <property type="entry name" value="EF_G_EF_2_B"/>
    <property type="match status" value="1"/>
</dbReference>
<dbReference type="InterPro" id="IPR041095">
    <property type="entry name" value="EFG_II"/>
</dbReference>
<dbReference type="InterPro" id="IPR009022">
    <property type="entry name" value="EFG_III"/>
</dbReference>
<dbReference type="InterPro" id="IPR035647">
    <property type="entry name" value="EFG_III/V"/>
</dbReference>
<dbReference type="InterPro" id="IPR047872">
    <property type="entry name" value="EFG_IV"/>
</dbReference>
<dbReference type="InterPro" id="IPR035649">
    <property type="entry name" value="EFG_V"/>
</dbReference>
<dbReference type="InterPro" id="IPR000640">
    <property type="entry name" value="EFG_V-like"/>
</dbReference>
<dbReference type="InterPro" id="IPR004161">
    <property type="entry name" value="EFTu-like_2"/>
</dbReference>
<dbReference type="InterPro" id="IPR031157">
    <property type="entry name" value="G_TR_CS"/>
</dbReference>
<dbReference type="InterPro" id="IPR027417">
    <property type="entry name" value="P-loop_NTPase"/>
</dbReference>
<dbReference type="InterPro" id="IPR020568">
    <property type="entry name" value="Ribosomal_Su5_D2-typ_SF"/>
</dbReference>
<dbReference type="InterPro" id="IPR014721">
    <property type="entry name" value="Ribsml_uS5_D2-typ_fold_subgr"/>
</dbReference>
<dbReference type="InterPro" id="IPR005225">
    <property type="entry name" value="Small_GTP-bd"/>
</dbReference>
<dbReference type="InterPro" id="IPR000795">
    <property type="entry name" value="T_Tr_GTP-bd_dom"/>
</dbReference>
<dbReference type="InterPro" id="IPR009000">
    <property type="entry name" value="Transl_B-barrel_sf"/>
</dbReference>
<dbReference type="InterPro" id="IPR004540">
    <property type="entry name" value="Transl_elong_EFG/EF2"/>
</dbReference>
<dbReference type="InterPro" id="IPR005517">
    <property type="entry name" value="Transl_elong_EFG/EF2_IV"/>
</dbReference>
<dbReference type="NCBIfam" id="TIGR00484">
    <property type="entry name" value="EF-G"/>
    <property type="match status" value="1"/>
</dbReference>
<dbReference type="NCBIfam" id="NF009381">
    <property type="entry name" value="PRK12740.1-5"/>
    <property type="match status" value="1"/>
</dbReference>
<dbReference type="NCBIfam" id="TIGR00231">
    <property type="entry name" value="small_GTP"/>
    <property type="match status" value="1"/>
</dbReference>
<dbReference type="PANTHER" id="PTHR43261:SF1">
    <property type="entry name" value="RIBOSOME-RELEASING FACTOR 2, MITOCHONDRIAL"/>
    <property type="match status" value="1"/>
</dbReference>
<dbReference type="PANTHER" id="PTHR43261">
    <property type="entry name" value="TRANSLATION ELONGATION FACTOR G-RELATED"/>
    <property type="match status" value="1"/>
</dbReference>
<dbReference type="Pfam" id="PF00679">
    <property type="entry name" value="EFG_C"/>
    <property type="match status" value="1"/>
</dbReference>
<dbReference type="Pfam" id="PF14492">
    <property type="entry name" value="EFG_III"/>
    <property type="match status" value="1"/>
</dbReference>
<dbReference type="Pfam" id="PF03764">
    <property type="entry name" value="EFG_IV"/>
    <property type="match status" value="1"/>
</dbReference>
<dbReference type="Pfam" id="PF00009">
    <property type="entry name" value="GTP_EFTU"/>
    <property type="match status" value="1"/>
</dbReference>
<dbReference type="Pfam" id="PF03144">
    <property type="entry name" value="GTP_EFTU_D2"/>
    <property type="match status" value="1"/>
</dbReference>
<dbReference type="PRINTS" id="PR00315">
    <property type="entry name" value="ELONGATNFCT"/>
</dbReference>
<dbReference type="SMART" id="SM00838">
    <property type="entry name" value="EFG_C"/>
    <property type="match status" value="1"/>
</dbReference>
<dbReference type="SMART" id="SM00889">
    <property type="entry name" value="EFG_IV"/>
    <property type="match status" value="1"/>
</dbReference>
<dbReference type="SUPFAM" id="SSF54980">
    <property type="entry name" value="EF-G C-terminal domain-like"/>
    <property type="match status" value="2"/>
</dbReference>
<dbReference type="SUPFAM" id="SSF52540">
    <property type="entry name" value="P-loop containing nucleoside triphosphate hydrolases"/>
    <property type="match status" value="1"/>
</dbReference>
<dbReference type="SUPFAM" id="SSF54211">
    <property type="entry name" value="Ribosomal protein S5 domain 2-like"/>
    <property type="match status" value="1"/>
</dbReference>
<dbReference type="SUPFAM" id="SSF50447">
    <property type="entry name" value="Translation proteins"/>
    <property type="match status" value="1"/>
</dbReference>
<dbReference type="PROSITE" id="PS00301">
    <property type="entry name" value="G_TR_1"/>
    <property type="match status" value="1"/>
</dbReference>
<dbReference type="PROSITE" id="PS51722">
    <property type="entry name" value="G_TR_2"/>
    <property type="match status" value="1"/>
</dbReference>
<organism>
    <name type="scientific">Chlamydia muridarum (strain MoPn / Nigg)</name>
    <dbReference type="NCBI Taxonomy" id="243161"/>
    <lineage>
        <taxon>Bacteria</taxon>
        <taxon>Pseudomonadati</taxon>
        <taxon>Chlamydiota</taxon>
        <taxon>Chlamydiia</taxon>
        <taxon>Chlamydiales</taxon>
        <taxon>Chlamydiaceae</taxon>
        <taxon>Chlamydia/Chlamydophila group</taxon>
        <taxon>Chlamydia</taxon>
    </lineage>
</organism>
<protein>
    <recommendedName>
        <fullName>Elongation factor G</fullName>
        <shortName>EF-G</shortName>
    </recommendedName>
</protein>
<name>EFG_CHLMU</name>
<reference key="1">
    <citation type="journal article" date="2000" name="Nucleic Acids Res.">
        <title>Genome sequences of Chlamydia trachomatis MoPn and Chlamydia pneumoniae AR39.</title>
        <authorList>
            <person name="Read T.D."/>
            <person name="Brunham R.C."/>
            <person name="Shen C."/>
            <person name="Gill S.R."/>
            <person name="Heidelberg J.F."/>
            <person name="White O."/>
            <person name="Hickey E.K."/>
            <person name="Peterson J.D."/>
            <person name="Utterback T.R."/>
            <person name="Berry K.J."/>
            <person name="Bass S."/>
            <person name="Linher K.D."/>
            <person name="Weidman J.F."/>
            <person name="Khouri H.M."/>
            <person name="Craven B."/>
            <person name="Bowman C."/>
            <person name="Dodson R.J."/>
            <person name="Gwinn M.L."/>
            <person name="Nelson W.C."/>
            <person name="DeBoy R.T."/>
            <person name="Kolonay J.F."/>
            <person name="McClarty G."/>
            <person name="Salzberg S.L."/>
            <person name="Eisen J.A."/>
            <person name="Fraser C.M."/>
        </authorList>
    </citation>
    <scope>NUCLEOTIDE SEQUENCE [LARGE SCALE GENOMIC DNA]</scope>
    <source>
        <strain>MoPn / Nigg</strain>
    </source>
</reference>
<gene>
    <name type="primary">fusA</name>
    <name type="ordered locus">TC_0721</name>
</gene>
<sequence length="694" mass="76522">MSDQEFGLDAIRNIGIMAHIDAGKTTTTERILFYAGRTHKIGEVHEGGATMDWMEQEQERGITITSAATTVFWLGSKINIIDTPGHVDFTIEVERSLRVLDGAVAVFDAVSGVEPQSETVWRQANKYGVPRVAFVNKMDRMGANYFGAVESMREKLGANAIPVHCPIGAESQFVGMVDLISQKALYFLDDSLGAKWEEREIPEDLQEQCEVLRMQLLEELATVDETNEAFMEKVLEAPESITEEEIHRVMRKGVIEGKINPVLCGSAFKNKGVQQLLDVIVKWLPSPLDRGNVRGMNLKTGEEVCLKPSKDGPLAALAFKIMTDPYVGRITFIRIYSGTLKKGSAILNSTKDKKERISRLLEMHANERTDRDEFTVGDIGACVGLKFSVTGDTLCDENQEIVLERIEAPEPVIDMAIEPKSKGDREKLAQALSALSEEDPTFRVSTNEETGQTIISGMGELHLDILRDRMIREFKVEANVGKPQVSYKETITKASDSETKYVKQSGGRGQYAHVCLEIEPNEPGKGNEVVSKIVGGVIPKEYIPAVIKGVEEGLNSGVLAGYGLVDVKVSIVFGSYHEVDSSEMAFKICGSMAVKEACRKALPVILEPIMKVTVITPEDHLGDVIGDLNRRRGKILGQEASRNMAQVNAEVPLSEMFGYMTSLRSLTSGRATSTMEPAFFAKVPQKIQEEIVKK</sequence>